<dbReference type="EC" id="4.2.1.70" evidence="1"/>
<dbReference type="EMBL" id="CP000812">
    <property type="protein sequence ID" value="ABV34518.1"/>
    <property type="molecule type" value="Genomic_DNA"/>
</dbReference>
<dbReference type="RefSeq" id="WP_012003994.1">
    <property type="nucleotide sequence ID" value="NZ_BSDV01000001.1"/>
</dbReference>
<dbReference type="SMR" id="A8F8N4"/>
<dbReference type="STRING" id="416591.Tlet_1964"/>
<dbReference type="KEGG" id="tle:Tlet_1964"/>
<dbReference type="eggNOG" id="COG2313">
    <property type="taxonomic scope" value="Bacteria"/>
</dbReference>
<dbReference type="HOGENOM" id="CLU_012201_0_1_0"/>
<dbReference type="OrthoDB" id="9805870at2"/>
<dbReference type="Proteomes" id="UP000002016">
    <property type="component" value="Chromosome"/>
</dbReference>
<dbReference type="GO" id="GO:0005737">
    <property type="term" value="C:cytoplasm"/>
    <property type="evidence" value="ECO:0007669"/>
    <property type="project" value="TreeGrafter"/>
</dbReference>
<dbReference type="GO" id="GO:0016798">
    <property type="term" value="F:hydrolase activity, acting on glycosyl bonds"/>
    <property type="evidence" value="ECO:0007669"/>
    <property type="project" value="UniProtKB-KW"/>
</dbReference>
<dbReference type="GO" id="GO:0046872">
    <property type="term" value="F:metal ion binding"/>
    <property type="evidence" value="ECO:0007669"/>
    <property type="project" value="UniProtKB-KW"/>
</dbReference>
<dbReference type="GO" id="GO:0004730">
    <property type="term" value="F:pseudouridylate synthase activity"/>
    <property type="evidence" value="ECO:0007669"/>
    <property type="project" value="UniProtKB-UniRule"/>
</dbReference>
<dbReference type="GO" id="GO:0046113">
    <property type="term" value="P:nucleobase catabolic process"/>
    <property type="evidence" value="ECO:0007669"/>
    <property type="project" value="UniProtKB-UniRule"/>
</dbReference>
<dbReference type="Gene3D" id="3.40.1790.10">
    <property type="entry name" value="Indigoidine synthase domain"/>
    <property type="match status" value="1"/>
</dbReference>
<dbReference type="HAMAP" id="MF_01876">
    <property type="entry name" value="PsiMP_glycosidase"/>
    <property type="match status" value="1"/>
</dbReference>
<dbReference type="InterPro" id="IPR022830">
    <property type="entry name" value="Indigdn_synthA-like"/>
</dbReference>
<dbReference type="InterPro" id="IPR007342">
    <property type="entry name" value="PsuG"/>
</dbReference>
<dbReference type="PANTHER" id="PTHR42909:SF1">
    <property type="entry name" value="CARBOHYDRATE KINASE PFKB DOMAIN-CONTAINING PROTEIN"/>
    <property type="match status" value="1"/>
</dbReference>
<dbReference type="PANTHER" id="PTHR42909">
    <property type="entry name" value="ZGC:136858"/>
    <property type="match status" value="1"/>
</dbReference>
<dbReference type="Pfam" id="PF04227">
    <property type="entry name" value="Indigoidine_A"/>
    <property type="match status" value="1"/>
</dbReference>
<dbReference type="SUPFAM" id="SSF110581">
    <property type="entry name" value="Indigoidine synthase A-like"/>
    <property type="match status" value="1"/>
</dbReference>
<sequence length="284" mass="31324">MEKILALESTVIAHGLPFPINIDTAVELEELAAETGCSAKTIGIIAGQIKVGLSREEIVQIASRKDVLKIGTAEIPFALAKKMWAATTVSATMRIAHLNNIKVFATGGIGGVHKIDQWDVSQDLAELSRTRMIVVSAGPKSILDLRSTVEMLETFQITVVGYKTDELPAFYCKSTSIHINRVDSFEEIASIFLFKEKFNLPGAVLVFNPIPDEHAIEVEQFEEWYRLSEHDLDASSVKGKGVTPFLLSRLAHYSKGKTVRSNVELLKNNVKVACEILNQLSKMQ</sequence>
<accession>A8F8N4</accession>
<keyword id="KW-0326">Glycosidase</keyword>
<keyword id="KW-0378">Hydrolase</keyword>
<keyword id="KW-0456">Lyase</keyword>
<keyword id="KW-0464">Manganese</keyword>
<keyword id="KW-0479">Metal-binding</keyword>
<keyword id="KW-1185">Reference proteome</keyword>
<organism>
    <name type="scientific">Pseudothermotoga lettingae (strain ATCC BAA-301 / DSM 14385 / NBRC 107922 / TMO)</name>
    <name type="common">Thermotoga lettingae</name>
    <dbReference type="NCBI Taxonomy" id="416591"/>
    <lineage>
        <taxon>Bacteria</taxon>
        <taxon>Thermotogati</taxon>
        <taxon>Thermotogota</taxon>
        <taxon>Thermotogae</taxon>
        <taxon>Thermotogales</taxon>
        <taxon>Thermotogaceae</taxon>
        <taxon>Pseudothermotoga</taxon>
    </lineage>
</organism>
<protein>
    <recommendedName>
        <fullName evidence="1">Pseudouridine-5'-phosphate glycosidase</fullName>
        <shortName evidence="1">PsiMP glycosidase</shortName>
        <ecNumber evidence="1">4.2.1.70</ecNumber>
    </recommendedName>
</protein>
<gene>
    <name evidence="1" type="primary">psuG</name>
    <name type="ordered locus">Tlet_1964</name>
</gene>
<evidence type="ECO:0000255" key="1">
    <source>
        <dbReference type="HAMAP-Rule" id="MF_01876"/>
    </source>
</evidence>
<name>PSUG_PSELT</name>
<comment type="function">
    <text evidence="1">Catalyzes the reversible cleavage of pseudouridine 5'-phosphate (PsiMP) to ribose 5-phosphate and uracil. Functions biologically in the cleavage direction, as part of a pseudouridine degradation pathway.</text>
</comment>
<comment type="catalytic activity">
    <reaction evidence="1">
        <text>D-ribose 5-phosphate + uracil = psi-UMP + H2O</text>
        <dbReference type="Rhea" id="RHEA:18337"/>
        <dbReference type="ChEBI" id="CHEBI:15377"/>
        <dbReference type="ChEBI" id="CHEBI:17568"/>
        <dbReference type="ChEBI" id="CHEBI:58380"/>
        <dbReference type="ChEBI" id="CHEBI:78346"/>
        <dbReference type="EC" id="4.2.1.70"/>
    </reaction>
</comment>
<comment type="cofactor">
    <cofactor evidence="1">
        <name>Mn(2+)</name>
        <dbReference type="ChEBI" id="CHEBI:29035"/>
    </cofactor>
    <text evidence="1">Binds 1 Mn(2+) ion per subunit.</text>
</comment>
<comment type="subunit">
    <text evidence="1">Homotrimer.</text>
</comment>
<comment type="similarity">
    <text evidence="1">Belongs to the pseudouridine-5'-phosphate glycosidase family.</text>
</comment>
<reference key="1">
    <citation type="submission" date="2007-08" db="EMBL/GenBank/DDBJ databases">
        <title>Complete sequence of Thermotoga lettingae TMO.</title>
        <authorList>
            <consortium name="US DOE Joint Genome Institute"/>
            <person name="Copeland A."/>
            <person name="Lucas S."/>
            <person name="Lapidus A."/>
            <person name="Barry K."/>
            <person name="Glavina del Rio T."/>
            <person name="Dalin E."/>
            <person name="Tice H."/>
            <person name="Pitluck S."/>
            <person name="Foster B."/>
            <person name="Bruce D."/>
            <person name="Schmutz J."/>
            <person name="Larimer F."/>
            <person name="Land M."/>
            <person name="Hauser L."/>
            <person name="Kyrpides N."/>
            <person name="Mikhailova N."/>
            <person name="Nelson K."/>
            <person name="Gogarten J.P."/>
            <person name="Noll K."/>
            <person name="Richardson P."/>
        </authorList>
    </citation>
    <scope>NUCLEOTIDE SEQUENCE [LARGE SCALE GENOMIC DNA]</scope>
    <source>
        <strain>ATCC BAA-301 / DSM 14385 / NBRC 107922 / TMO</strain>
    </source>
</reference>
<feature type="chain" id="PRO_0000390554" description="Pseudouridine-5'-phosphate glycosidase">
    <location>
        <begin position="1"/>
        <end position="284"/>
    </location>
</feature>
<feature type="active site" description="Proton donor" evidence="1">
    <location>
        <position position="8"/>
    </location>
</feature>
<feature type="active site" description="Nucleophile" evidence="1">
    <location>
        <position position="140"/>
    </location>
</feature>
<feature type="binding site" evidence="1">
    <location>
        <position position="69"/>
    </location>
    <ligand>
        <name>substrate</name>
    </ligand>
</feature>
<feature type="binding site" evidence="1">
    <location>
        <position position="89"/>
    </location>
    <ligand>
        <name>substrate</name>
    </ligand>
</feature>
<feature type="binding site" evidence="1">
    <location>
        <position position="119"/>
    </location>
    <ligand>
        <name>Mn(2+)</name>
        <dbReference type="ChEBI" id="CHEBI:29035"/>
    </ligand>
</feature>
<feature type="binding site" evidence="1">
    <location>
        <begin position="121"/>
        <end position="123"/>
    </location>
    <ligand>
        <name>substrate</name>
    </ligand>
</feature>
<proteinExistence type="inferred from homology"/>